<feature type="chain" id="PRO_0000391090" description="NADH-quinone oxidoreductase subunit N">
    <location>
        <begin position="1"/>
        <end position="498"/>
    </location>
</feature>
<feature type="transmembrane region" description="Helical" evidence="1">
    <location>
        <begin position="10"/>
        <end position="30"/>
    </location>
</feature>
<feature type="transmembrane region" description="Helical" evidence="1">
    <location>
        <begin position="44"/>
        <end position="64"/>
    </location>
</feature>
<feature type="transmembrane region" description="Helical" evidence="1">
    <location>
        <begin position="68"/>
        <end position="88"/>
    </location>
</feature>
<feature type="transmembrane region" description="Helical" evidence="1">
    <location>
        <begin position="109"/>
        <end position="129"/>
    </location>
</feature>
<feature type="transmembrane region" description="Helical" evidence="1">
    <location>
        <begin position="130"/>
        <end position="150"/>
    </location>
</feature>
<feature type="transmembrane region" description="Helical" evidence="1">
    <location>
        <begin position="164"/>
        <end position="184"/>
    </location>
</feature>
<feature type="transmembrane region" description="Helical" evidence="1">
    <location>
        <begin position="207"/>
        <end position="227"/>
    </location>
</feature>
<feature type="transmembrane region" description="Helical" evidence="1">
    <location>
        <begin position="239"/>
        <end position="259"/>
    </location>
</feature>
<feature type="transmembrane region" description="Helical" evidence="1">
    <location>
        <begin position="273"/>
        <end position="293"/>
    </location>
</feature>
<feature type="transmembrane region" description="Helical" evidence="1">
    <location>
        <begin position="301"/>
        <end position="321"/>
    </location>
</feature>
<feature type="transmembrane region" description="Helical" evidence="1">
    <location>
        <begin position="328"/>
        <end position="348"/>
    </location>
</feature>
<feature type="transmembrane region" description="Helical" evidence="1">
    <location>
        <begin position="377"/>
        <end position="397"/>
    </location>
</feature>
<feature type="transmembrane region" description="Helical" evidence="1">
    <location>
        <begin position="412"/>
        <end position="434"/>
    </location>
</feature>
<feature type="transmembrane region" description="Helical" evidence="1">
    <location>
        <begin position="458"/>
        <end position="478"/>
    </location>
</feature>
<dbReference type="EC" id="7.1.1.-" evidence="1"/>
<dbReference type="EMBL" id="CP001182">
    <property type="protein sequence ID" value="ACJ40610.1"/>
    <property type="molecule type" value="Genomic_DNA"/>
</dbReference>
<dbReference type="RefSeq" id="WP_001011955.1">
    <property type="nucleotide sequence ID" value="NC_011586.2"/>
</dbReference>
<dbReference type="SMR" id="B7I751"/>
<dbReference type="GeneID" id="92892694"/>
<dbReference type="KEGG" id="abn:AB57_0812"/>
<dbReference type="HOGENOM" id="CLU_007100_1_5_6"/>
<dbReference type="Proteomes" id="UP000007094">
    <property type="component" value="Chromosome"/>
</dbReference>
<dbReference type="GO" id="GO:0005886">
    <property type="term" value="C:plasma membrane"/>
    <property type="evidence" value="ECO:0007669"/>
    <property type="project" value="UniProtKB-SubCell"/>
</dbReference>
<dbReference type="GO" id="GO:0008137">
    <property type="term" value="F:NADH dehydrogenase (ubiquinone) activity"/>
    <property type="evidence" value="ECO:0007669"/>
    <property type="project" value="InterPro"/>
</dbReference>
<dbReference type="GO" id="GO:0050136">
    <property type="term" value="F:NADH:ubiquinone reductase (non-electrogenic) activity"/>
    <property type="evidence" value="ECO:0007669"/>
    <property type="project" value="UniProtKB-UniRule"/>
</dbReference>
<dbReference type="GO" id="GO:0048038">
    <property type="term" value="F:quinone binding"/>
    <property type="evidence" value="ECO:0007669"/>
    <property type="project" value="UniProtKB-KW"/>
</dbReference>
<dbReference type="GO" id="GO:0042773">
    <property type="term" value="P:ATP synthesis coupled electron transport"/>
    <property type="evidence" value="ECO:0007669"/>
    <property type="project" value="InterPro"/>
</dbReference>
<dbReference type="HAMAP" id="MF_00445">
    <property type="entry name" value="NDH1_NuoN_1"/>
    <property type="match status" value="1"/>
</dbReference>
<dbReference type="InterPro" id="IPR010096">
    <property type="entry name" value="NADH-Q_OxRdtase_suN/2"/>
</dbReference>
<dbReference type="InterPro" id="IPR001750">
    <property type="entry name" value="ND/Mrp_TM"/>
</dbReference>
<dbReference type="NCBIfam" id="TIGR01770">
    <property type="entry name" value="NDH_I_N"/>
    <property type="match status" value="1"/>
</dbReference>
<dbReference type="NCBIfam" id="NF004439">
    <property type="entry name" value="PRK05777.1-1"/>
    <property type="match status" value="1"/>
</dbReference>
<dbReference type="PANTHER" id="PTHR22773">
    <property type="entry name" value="NADH DEHYDROGENASE"/>
    <property type="match status" value="1"/>
</dbReference>
<dbReference type="Pfam" id="PF00361">
    <property type="entry name" value="Proton_antipo_M"/>
    <property type="match status" value="1"/>
</dbReference>
<keyword id="KW-0997">Cell inner membrane</keyword>
<keyword id="KW-1003">Cell membrane</keyword>
<keyword id="KW-0472">Membrane</keyword>
<keyword id="KW-0520">NAD</keyword>
<keyword id="KW-0874">Quinone</keyword>
<keyword id="KW-1278">Translocase</keyword>
<keyword id="KW-0812">Transmembrane</keyword>
<keyword id="KW-1133">Transmembrane helix</keyword>
<keyword id="KW-0813">Transport</keyword>
<keyword id="KW-0830">Ubiquinone</keyword>
<gene>
    <name evidence="1" type="primary">nuoN</name>
    <name type="ordered locus">AB57_0812</name>
</gene>
<evidence type="ECO:0000255" key="1">
    <source>
        <dbReference type="HAMAP-Rule" id="MF_00445"/>
    </source>
</evidence>
<organism>
    <name type="scientific">Acinetobacter baumannii (strain AB0057)</name>
    <dbReference type="NCBI Taxonomy" id="480119"/>
    <lineage>
        <taxon>Bacteria</taxon>
        <taxon>Pseudomonadati</taxon>
        <taxon>Pseudomonadota</taxon>
        <taxon>Gammaproteobacteria</taxon>
        <taxon>Moraxellales</taxon>
        <taxon>Moraxellaceae</taxon>
        <taxon>Acinetobacter</taxon>
        <taxon>Acinetobacter calcoaceticus/baumannii complex</taxon>
    </lineage>
</organism>
<sequence length="498" mass="53942">MNFTVSFSTLMPLAPVMIVALTAVVVMLLISIKRNHNLIATTSVVGLNLAALYILLELFGGKFVPANVMGMFMVDPFTMFYQFMILVASLACCTLSHAYIETYKDNREELYLLLLASVAGAMLMVASSHYASFFISLELMSIPVYGLLAYTYQRSQSLEAGIKYLVLSATASAMLLMGMAYIYAYTGSLSFYDSVQALFGAIKQPMVLLGLALIIFAVAFKLSLAPFHKWTPDVYAGAPAPMATFLATAAKVATIGLFVRYLLASGAIMVNSLVTVLTIIAVLSILVGNLLAVRQVNLKRILGYSSIAHFGYLLIALISMTYASLGSVTVYVVTYVLTTIGAFGAVALMSSPYNNVDEAQSLADYRGLFWRRPVLTATLTVMMLSLAGIPLTAGFIGKFLVVMAAVTTQHWFLAAMIIVGSGIGLYYYLRVMVVMYMTPPETPRIDADAHWGQKVGGLMVLAAAALVIILGVYPDPMINLALKAEILSPLHFMLSQQQ</sequence>
<proteinExistence type="inferred from homology"/>
<comment type="function">
    <text evidence="1">NDH-1 shuttles electrons from NADH, via FMN and iron-sulfur (Fe-S) centers, to quinones in the respiratory chain. The immediate electron acceptor for the enzyme in this species is believed to be ubiquinone. Couples the redox reaction to proton translocation (for every two electrons transferred, four hydrogen ions are translocated across the cytoplasmic membrane), and thus conserves the redox energy in a proton gradient.</text>
</comment>
<comment type="catalytic activity">
    <reaction evidence="1">
        <text>a quinone + NADH + 5 H(+)(in) = a quinol + NAD(+) + 4 H(+)(out)</text>
        <dbReference type="Rhea" id="RHEA:57888"/>
        <dbReference type="ChEBI" id="CHEBI:15378"/>
        <dbReference type="ChEBI" id="CHEBI:24646"/>
        <dbReference type="ChEBI" id="CHEBI:57540"/>
        <dbReference type="ChEBI" id="CHEBI:57945"/>
        <dbReference type="ChEBI" id="CHEBI:132124"/>
    </reaction>
</comment>
<comment type="subunit">
    <text evidence="1">NDH-1 is composed of 14 different subunits. Subunits NuoA, H, J, K, L, M, N constitute the membrane sector of the complex.</text>
</comment>
<comment type="subcellular location">
    <subcellularLocation>
        <location evidence="1">Cell inner membrane</location>
        <topology evidence="1">Multi-pass membrane protein</topology>
    </subcellularLocation>
</comment>
<comment type="similarity">
    <text evidence="1">Belongs to the complex I subunit 2 family.</text>
</comment>
<name>NUON_ACIB5</name>
<reference key="1">
    <citation type="journal article" date="2008" name="J. Bacteriol.">
        <title>Comparative genome sequence analysis of multidrug-resistant Acinetobacter baumannii.</title>
        <authorList>
            <person name="Adams M.D."/>
            <person name="Goglin K."/>
            <person name="Molyneaux N."/>
            <person name="Hujer K.M."/>
            <person name="Lavender H."/>
            <person name="Jamison J.J."/>
            <person name="MacDonald I.J."/>
            <person name="Martin K.M."/>
            <person name="Russo T."/>
            <person name="Campagnari A.A."/>
            <person name="Hujer A.M."/>
            <person name="Bonomo R.A."/>
            <person name="Gill S.R."/>
        </authorList>
    </citation>
    <scope>NUCLEOTIDE SEQUENCE [LARGE SCALE GENOMIC DNA]</scope>
    <source>
        <strain>AB0057</strain>
    </source>
</reference>
<protein>
    <recommendedName>
        <fullName evidence="1">NADH-quinone oxidoreductase subunit N</fullName>
        <ecNumber evidence="1">7.1.1.-</ecNumber>
    </recommendedName>
    <alternativeName>
        <fullName evidence="1">NADH dehydrogenase I subunit N</fullName>
    </alternativeName>
    <alternativeName>
        <fullName evidence="1">NDH-1 subunit N</fullName>
    </alternativeName>
</protein>
<accession>B7I751</accession>